<accession>P22426</accession>
<gene>
    <name type="primary">cbi</name>
</gene>
<reference key="1">
    <citation type="journal article" date="1988" name="Mol. Gen. Genet.">
        <title>Sequence, expression and localization of the immunity protein for colicin B.</title>
        <authorList>
            <person name="Schramm E."/>
            <person name="Oelschlaeger T."/>
            <person name="Troeger W."/>
            <person name="Braun V."/>
        </authorList>
    </citation>
    <scope>NUCLEOTIDE SEQUENCE [GENOMIC DNA]</scope>
</reference>
<proteinExistence type="predicted"/>
<evidence type="ECO:0000255" key="1"/>
<keyword id="KW-0079">Bacteriocin immunity</keyword>
<keyword id="KW-0997">Cell inner membrane</keyword>
<keyword id="KW-1003">Cell membrane</keyword>
<keyword id="KW-0472">Membrane</keyword>
<keyword id="KW-0614">Plasmid</keyword>
<keyword id="KW-0812">Transmembrane</keyword>
<keyword id="KW-1133">Transmembrane helix</keyword>
<dbReference type="EMBL" id="M36645">
    <property type="protein sequence ID" value="AAA23540.1"/>
    <property type="molecule type" value="Genomic_DNA"/>
</dbReference>
<dbReference type="PIR" id="S06459">
    <property type="entry name" value="IMECB"/>
</dbReference>
<dbReference type="RefSeq" id="WP_000203268.1">
    <property type="nucleotide sequence ID" value="NZ_WVVE01000043.1"/>
</dbReference>
<dbReference type="SMR" id="P22426"/>
<dbReference type="GO" id="GO:0005886">
    <property type="term" value="C:plasma membrane"/>
    <property type="evidence" value="ECO:0007669"/>
    <property type="project" value="UniProtKB-SubCell"/>
</dbReference>
<dbReference type="GO" id="GO:0015643">
    <property type="term" value="F:toxic substance binding"/>
    <property type="evidence" value="ECO:0007669"/>
    <property type="project" value="InterPro"/>
</dbReference>
<dbReference type="GO" id="GO:0030153">
    <property type="term" value="P:bacteriocin immunity"/>
    <property type="evidence" value="ECO:0007669"/>
    <property type="project" value="UniProtKB-KW"/>
</dbReference>
<dbReference type="InterPro" id="IPR005557">
    <property type="entry name" value="Colicin_im"/>
</dbReference>
<dbReference type="Pfam" id="PF03857">
    <property type="entry name" value="Colicin_im"/>
    <property type="match status" value="1"/>
</dbReference>
<dbReference type="PIRSF" id="PIRSF003003">
    <property type="entry name" value="Colicin_im"/>
    <property type="match status" value="1"/>
</dbReference>
<geneLocation type="plasmid">
    <name>ColBM-pF166</name>
</geneLocation>
<name>IMMB_ECOLX</name>
<feature type="chain" id="PRO_0000218691" description="Colicin-B immunity protein">
    <location>
        <begin position="1"/>
        <end position="175"/>
    </location>
</feature>
<feature type="transmembrane region" description="Helical" evidence="1">
    <location>
        <begin position="14"/>
        <end position="32"/>
    </location>
</feature>
<feature type="transmembrane region" description="Helical" evidence="1">
    <location>
        <begin position="104"/>
        <end position="121"/>
    </location>
</feature>
<feature type="transmembrane region" description="Helical" evidence="1">
    <location>
        <begin position="149"/>
        <end position="168"/>
    </location>
</feature>
<comment type="function">
    <text>This protein is able to protect a cell, which harbors the plasmid ColB encoding colicin B, against colicin B.</text>
</comment>
<comment type="subcellular location">
    <subcellularLocation>
        <location>Cell inner membrane</location>
        <topology>Multi-pass membrane protein</topology>
    </subcellularLocation>
</comment>
<organism>
    <name type="scientific">Escherichia coli</name>
    <dbReference type="NCBI Taxonomy" id="562"/>
    <lineage>
        <taxon>Bacteria</taxon>
        <taxon>Pseudomonadati</taxon>
        <taxon>Pseudomonadota</taxon>
        <taxon>Gammaproteobacteria</taxon>
        <taxon>Enterobacterales</taxon>
        <taxon>Enterobacteriaceae</taxon>
        <taxon>Escherichia</taxon>
    </lineage>
</organism>
<protein>
    <recommendedName>
        <fullName>Colicin-B immunity protein</fullName>
    </recommendedName>
    <alternativeName>
        <fullName>Microcin-B immunity protein</fullName>
    </alternativeName>
</protein>
<sequence>MTSNKDKNKKANEILYAFSIIGIIPLMAILILRINDPYSQVLYYLYNKVAFLPSITSLHDPVMTTLMSNYNKTAPVMGILVFLCTYKTREIIKPVTRKLVVQSCFWGPVFYAILIYITLFYNLELTTAGGFFKLLSHNVITLFILYCSIYFTVLTMTYAILLMPLLVIKYFKGRQ</sequence>